<name>RIMKB_DANRE</name>
<feature type="chain" id="PRO_0000282573" description="Beta-citrylglutamate synthase B">
    <location>
        <begin position="1"/>
        <end position="405"/>
    </location>
</feature>
<feature type="domain" description="ATP-grasp" evidence="3">
    <location>
        <begin position="115"/>
        <end position="300"/>
    </location>
</feature>
<feature type="region of interest" description="Disordered" evidence="4">
    <location>
        <begin position="359"/>
        <end position="387"/>
    </location>
</feature>
<feature type="compositionally biased region" description="Low complexity" evidence="4">
    <location>
        <begin position="360"/>
        <end position="371"/>
    </location>
</feature>
<feature type="binding site" evidence="1">
    <location>
        <position position="154"/>
    </location>
    <ligand>
        <name>ATP</name>
        <dbReference type="ChEBI" id="CHEBI:30616"/>
    </ligand>
</feature>
<feature type="binding site" evidence="3">
    <location>
        <begin position="189"/>
        <end position="199"/>
    </location>
    <ligand>
        <name>ATP</name>
        <dbReference type="ChEBI" id="CHEBI:30616"/>
    </ligand>
</feature>
<feature type="binding site" evidence="1">
    <location>
        <position position="215"/>
    </location>
    <ligand>
        <name>ATP</name>
        <dbReference type="ChEBI" id="CHEBI:30616"/>
    </ligand>
</feature>
<feature type="binding site" evidence="3">
    <location>
        <position position="260"/>
    </location>
    <ligand>
        <name>Mg(2+)</name>
        <dbReference type="ChEBI" id="CHEBI:18420"/>
        <label>1</label>
    </ligand>
</feature>
<feature type="binding site" evidence="3">
    <location>
        <position position="260"/>
    </location>
    <ligand>
        <name>Mn(2+)</name>
        <dbReference type="ChEBI" id="CHEBI:29035"/>
        <label>1</label>
    </ligand>
</feature>
<feature type="binding site" evidence="3">
    <location>
        <position position="273"/>
    </location>
    <ligand>
        <name>Mg(2+)</name>
        <dbReference type="ChEBI" id="CHEBI:18420"/>
        <label>1</label>
    </ligand>
</feature>
<feature type="binding site" evidence="3">
    <location>
        <position position="273"/>
    </location>
    <ligand>
        <name>Mg(2+)</name>
        <dbReference type="ChEBI" id="CHEBI:18420"/>
        <label>2</label>
    </ligand>
</feature>
<feature type="binding site" evidence="3">
    <location>
        <position position="273"/>
    </location>
    <ligand>
        <name>Mn(2+)</name>
        <dbReference type="ChEBI" id="CHEBI:29035"/>
        <label>1</label>
    </ligand>
</feature>
<feature type="binding site" evidence="3">
    <location>
        <position position="273"/>
    </location>
    <ligand>
        <name>Mn(2+)</name>
        <dbReference type="ChEBI" id="CHEBI:29035"/>
        <label>2</label>
    </ligand>
</feature>
<feature type="binding site" evidence="3">
    <location>
        <position position="275"/>
    </location>
    <ligand>
        <name>Mg(2+)</name>
        <dbReference type="ChEBI" id="CHEBI:18420"/>
        <label>2</label>
    </ligand>
</feature>
<feature type="binding site" evidence="3">
    <location>
        <position position="275"/>
    </location>
    <ligand>
        <name>Mn(2+)</name>
        <dbReference type="ChEBI" id="CHEBI:29035"/>
        <label>2</label>
    </ligand>
</feature>
<reference key="1">
    <citation type="submission" date="2004-09" db="EMBL/GenBank/DDBJ databases">
        <authorList>
            <consortium name="NIH - Zebrafish Gene Collection (ZGC) project"/>
        </authorList>
    </citation>
    <scope>NUCLEOTIDE SEQUENCE [LARGE SCALE MRNA]</scope>
</reference>
<organism>
    <name type="scientific">Danio rerio</name>
    <name type="common">Zebrafish</name>
    <name type="synonym">Brachydanio rerio</name>
    <dbReference type="NCBI Taxonomy" id="7955"/>
    <lineage>
        <taxon>Eukaryota</taxon>
        <taxon>Metazoa</taxon>
        <taxon>Chordata</taxon>
        <taxon>Craniata</taxon>
        <taxon>Vertebrata</taxon>
        <taxon>Euteleostomi</taxon>
        <taxon>Actinopterygii</taxon>
        <taxon>Neopterygii</taxon>
        <taxon>Teleostei</taxon>
        <taxon>Ostariophysi</taxon>
        <taxon>Cypriniformes</taxon>
        <taxon>Danionidae</taxon>
        <taxon>Danioninae</taxon>
        <taxon>Danio</taxon>
    </lineage>
</organism>
<proteinExistence type="evidence at transcript level"/>
<protein>
    <recommendedName>
        <fullName>Beta-citrylglutamate synthase B</fullName>
        <ecNumber evidence="2">6.3.1.17</ecNumber>
    </recommendedName>
    <alternativeName>
        <fullName>N-acetyl-aspartylglutamate synthetase B</fullName>
        <shortName>NAAG synthetase B</shortName>
        <shortName>NAAGS</shortName>
        <ecNumber evidence="2">6.3.2.41</ecNumber>
    </alternativeName>
    <alternativeName>
        <fullName>Ribosomal protein S6 modification-like protein B</fullName>
    </alternativeName>
</protein>
<keyword id="KW-0067">ATP-binding</keyword>
<keyword id="KW-0963">Cytoplasm</keyword>
<keyword id="KW-0436">Ligase</keyword>
<keyword id="KW-0460">Magnesium</keyword>
<keyword id="KW-0464">Manganese</keyword>
<keyword id="KW-0479">Metal-binding</keyword>
<keyword id="KW-0547">Nucleotide-binding</keyword>
<keyword id="KW-1185">Reference proteome</keyword>
<accession>Q66HZ2</accession>
<evidence type="ECO:0000250" key="1"/>
<evidence type="ECO:0000250" key="2">
    <source>
        <dbReference type="UniProtKB" id="Q80WS1"/>
    </source>
</evidence>
<evidence type="ECO:0000255" key="3">
    <source>
        <dbReference type="PROSITE-ProRule" id="PRU00409"/>
    </source>
</evidence>
<evidence type="ECO:0000256" key="4">
    <source>
        <dbReference type="SAM" id="MobiDB-lite"/>
    </source>
</evidence>
<evidence type="ECO:0000305" key="5"/>
<dbReference type="EC" id="6.3.1.17" evidence="2"/>
<dbReference type="EC" id="6.3.2.41" evidence="2"/>
<dbReference type="EMBL" id="BC081615">
    <property type="protein sequence ID" value="AAH81615.1"/>
    <property type="molecule type" value="mRNA"/>
</dbReference>
<dbReference type="RefSeq" id="NP_001004554.1">
    <property type="nucleotide sequence ID" value="NM_001004554.2"/>
</dbReference>
<dbReference type="SMR" id="Q66HZ2"/>
<dbReference type="FunCoup" id="Q66HZ2">
    <property type="interactions" value="53"/>
</dbReference>
<dbReference type="STRING" id="7955.ENSDARP00000007712"/>
<dbReference type="PaxDb" id="7955-ENSDARP00000007712"/>
<dbReference type="Ensembl" id="ENSDART00000005337">
    <property type="protein sequence ID" value="ENSDARP00000007712"/>
    <property type="gene ID" value="ENSDARG00000016830"/>
</dbReference>
<dbReference type="Ensembl" id="ENSDART00000189633">
    <property type="protein sequence ID" value="ENSDARP00000154796"/>
    <property type="gene ID" value="ENSDARG00000112193"/>
</dbReference>
<dbReference type="GeneID" id="447815"/>
<dbReference type="KEGG" id="dre:447815"/>
<dbReference type="AGR" id="ZFIN:ZDB-GENE-040912-20"/>
<dbReference type="CTD" id="284716"/>
<dbReference type="ZFIN" id="ZDB-GENE-040912-20">
    <property type="gene designation" value="rimkla"/>
</dbReference>
<dbReference type="eggNOG" id="ENOG502QT4M">
    <property type="taxonomic scope" value="Eukaryota"/>
</dbReference>
<dbReference type="HOGENOM" id="CLU_054353_3_1_1"/>
<dbReference type="InParanoid" id="Q66HZ2"/>
<dbReference type="OMA" id="IDCPIRE"/>
<dbReference type="OrthoDB" id="10265738at2759"/>
<dbReference type="PhylomeDB" id="Q66HZ2"/>
<dbReference type="TreeFam" id="TF332035"/>
<dbReference type="Reactome" id="R-DRE-8964539">
    <property type="pathway name" value="Glutamate and glutamine metabolism"/>
</dbReference>
<dbReference type="PRO" id="PR:Q66HZ2"/>
<dbReference type="Proteomes" id="UP000000437">
    <property type="component" value="Alternate scaffold 8"/>
</dbReference>
<dbReference type="Proteomes" id="UP000000437">
    <property type="component" value="Chromosome 8"/>
</dbReference>
<dbReference type="Bgee" id="ENSDARG00000016830">
    <property type="expression patterns" value="Expressed in blastula and 32 other cell types or tissues"/>
</dbReference>
<dbReference type="ExpressionAtlas" id="Q66HZ2">
    <property type="expression patterns" value="baseline and differential"/>
</dbReference>
<dbReference type="GO" id="GO:0005737">
    <property type="term" value="C:cytoplasm"/>
    <property type="evidence" value="ECO:0000250"/>
    <property type="project" value="UniProtKB"/>
</dbReference>
<dbReference type="GO" id="GO:0005524">
    <property type="term" value="F:ATP binding"/>
    <property type="evidence" value="ECO:0007669"/>
    <property type="project" value="UniProtKB-KW"/>
</dbReference>
<dbReference type="GO" id="GO:0072591">
    <property type="term" value="F:citrate-L-glutamate ligase activity"/>
    <property type="evidence" value="ECO:0000250"/>
    <property type="project" value="UniProtKB"/>
</dbReference>
<dbReference type="GO" id="GO:0046872">
    <property type="term" value="F:metal ion binding"/>
    <property type="evidence" value="ECO:0007669"/>
    <property type="project" value="UniProtKB-KW"/>
</dbReference>
<dbReference type="GO" id="GO:0072590">
    <property type="term" value="F:N-acetyl-L-aspartate-L-glutamate ligase activity"/>
    <property type="evidence" value="ECO:0000250"/>
    <property type="project" value="UniProtKB"/>
</dbReference>
<dbReference type="GO" id="GO:0036211">
    <property type="term" value="P:protein modification process"/>
    <property type="evidence" value="ECO:0007669"/>
    <property type="project" value="InterPro"/>
</dbReference>
<dbReference type="FunFam" id="3.30.1490.20:FF:000011">
    <property type="entry name" value="beta-citrylglutamate synthase B isoform X1"/>
    <property type="match status" value="1"/>
</dbReference>
<dbReference type="FunFam" id="3.30.470.20:FF:000022">
    <property type="entry name" value="beta-citrylglutamate synthase B isoform X1"/>
    <property type="match status" value="1"/>
</dbReference>
<dbReference type="FunFam" id="3.40.50.20:FF:000014">
    <property type="entry name" value="beta-citrylglutamate synthase B isoform X1"/>
    <property type="match status" value="1"/>
</dbReference>
<dbReference type="Gene3D" id="3.40.50.20">
    <property type="match status" value="1"/>
</dbReference>
<dbReference type="Gene3D" id="3.30.1490.20">
    <property type="entry name" value="ATP-grasp fold, A domain"/>
    <property type="match status" value="1"/>
</dbReference>
<dbReference type="Gene3D" id="3.30.470.20">
    <property type="entry name" value="ATP-grasp fold, B domain"/>
    <property type="match status" value="1"/>
</dbReference>
<dbReference type="InterPro" id="IPR011761">
    <property type="entry name" value="ATP-grasp"/>
</dbReference>
<dbReference type="InterPro" id="IPR013651">
    <property type="entry name" value="ATP-grasp_RimK-type"/>
</dbReference>
<dbReference type="InterPro" id="IPR013815">
    <property type="entry name" value="ATP_grasp_subdomain_1"/>
</dbReference>
<dbReference type="InterPro" id="IPR004666">
    <property type="entry name" value="Rp_bS6_RimK/Lys_biosynth_LsyX"/>
</dbReference>
<dbReference type="NCBIfam" id="TIGR00768">
    <property type="entry name" value="rimK_fam"/>
    <property type="match status" value="1"/>
</dbReference>
<dbReference type="PANTHER" id="PTHR21621:SF0">
    <property type="entry name" value="BETA-CITRYLGLUTAMATE SYNTHASE B-RELATED"/>
    <property type="match status" value="1"/>
</dbReference>
<dbReference type="PANTHER" id="PTHR21621">
    <property type="entry name" value="RIBOSOMAL PROTEIN S6 MODIFICATION PROTEIN"/>
    <property type="match status" value="1"/>
</dbReference>
<dbReference type="Pfam" id="PF08443">
    <property type="entry name" value="RimK"/>
    <property type="match status" value="1"/>
</dbReference>
<dbReference type="SUPFAM" id="SSF56059">
    <property type="entry name" value="Glutathione synthetase ATP-binding domain-like"/>
    <property type="match status" value="1"/>
</dbReference>
<dbReference type="PROSITE" id="PS50975">
    <property type="entry name" value="ATP_GRASP"/>
    <property type="match status" value="1"/>
</dbReference>
<comment type="function">
    <text evidence="2">Catalyzes the synthesis of beta-citryl-L-glutamate and N-acetyl-L-aspartyl-L-glutamate. Beta-citryl-L-glutamate is synthesized more efficiently than N-acetyl-L-aspartyl-L-glutamate.</text>
</comment>
<comment type="catalytic activity">
    <reaction evidence="2">
        <text>citrate + L-glutamate + ATP = beta-citrylglutamate + ADP + phosphate + H(+)</text>
        <dbReference type="Rhea" id="RHEA:40043"/>
        <dbReference type="ChEBI" id="CHEBI:15378"/>
        <dbReference type="ChEBI" id="CHEBI:16947"/>
        <dbReference type="ChEBI" id="CHEBI:29985"/>
        <dbReference type="ChEBI" id="CHEBI:30616"/>
        <dbReference type="ChEBI" id="CHEBI:43474"/>
        <dbReference type="ChEBI" id="CHEBI:76942"/>
        <dbReference type="ChEBI" id="CHEBI:456216"/>
        <dbReference type="EC" id="6.3.1.17"/>
    </reaction>
</comment>
<comment type="catalytic activity">
    <reaction evidence="2">
        <text>N-acetyl-L-aspartate + L-glutamate + ATP = N-acetyl-L-aspartyl-L-glutamate + ADP + phosphate + H(+)</text>
        <dbReference type="Rhea" id="RHEA:40035"/>
        <dbReference type="ChEBI" id="CHEBI:15378"/>
        <dbReference type="ChEBI" id="CHEBI:16953"/>
        <dbReference type="ChEBI" id="CHEBI:29985"/>
        <dbReference type="ChEBI" id="CHEBI:30616"/>
        <dbReference type="ChEBI" id="CHEBI:43474"/>
        <dbReference type="ChEBI" id="CHEBI:76931"/>
        <dbReference type="ChEBI" id="CHEBI:456216"/>
        <dbReference type="EC" id="6.3.2.41"/>
    </reaction>
</comment>
<comment type="cofactor">
    <cofactor evidence="1">
        <name>Mg(2+)</name>
        <dbReference type="ChEBI" id="CHEBI:18420"/>
    </cofactor>
    <cofactor evidence="1">
        <name>Mn(2+)</name>
        <dbReference type="ChEBI" id="CHEBI:29035"/>
    </cofactor>
    <text evidence="1">Binds 2 magnesium or manganese ions per subunit.</text>
</comment>
<comment type="subcellular location">
    <subcellularLocation>
        <location evidence="1">Cytoplasm</location>
    </subcellularLocation>
</comment>
<comment type="miscellaneous">
    <text evidence="2">N-acetyl-L-aspartyl-L-glutamate (NAAG) is the most abundant dipeptide present in vertebrate central nervous system (CNS). Beta-citryl-L-glutamate, a structural analog of NAAG, is present in testis and immature brain.</text>
</comment>
<comment type="similarity">
    <text evidence="5">Belongs to the RimK family.</text>
</comment>
<sequence length="405" mass="44500">MCSRVWFITDRRISQEYPQIQILRALKERCVEDDVEFRYLLMDEIVLTITDGQLGLRVGQEIVTSYPQVAVVRVPTPWVQSDSDITVLRHLEKMGCRLVNRPQAILNCVNKFWTFQELAGHGVPLPDTYSYGGHDNFRKMIDEAEPLGYPVVVKNARGHRGKAVFLARDKHHLSDLCHLIRHEAPYLFQEYVKESHGRDVRVVLVGGRVIGSMLRCSTDGRMQSNCSLGGVGMMCPLSEQGKQLAVQVCNILGMDVCGIDLLQKNDGSFVVCEANANVGFIAFDQACGMDVAGIVADFVLSLLPSRLSRKMSLLSVVSSTSETSSEPEVCIPTEVIIPSEVCIPNEICPLGTTCPIPDAMSTMSTSSTSSESEADLTETGPTPVGANPAYNINSLLASEMKLLTE</sequence>
<gene>
    <name type="primary">rimklb</name>
    <name type="synonym">fam80b</name>
    <name type="ORF">zgc:92164</name>
</gene>